<sequence>MQTLPKERRYETLSYLPPLTDVQIEKQVQYILSQGYIPAVEFNEVSEPTELYWTLWKLPLFGAKTSREVLAEVQSCRSQYPGHYIRVVGFDNIKQCQILSFIVHKPSRY</sequence>
<comment type="function">
    <text evidence="2 4">RuBisCO catalyzes two reactions: the carboxylation of D-ribulose 1,5-bisphosphate, the primary event in carbon dioxide fixation, as well as the oxidative fragmentation of the pentose substrate in the photorespiration process. Both reactions occur simultaneously and in competition at the same active site. Although the small subunit is not catalytic it is essential for maximal activity.</text>
</comment>
<comment type="subunit">
    <text evidence="4">Heterohexadecamer of 8 large and 8 small subunits (PubMed:32451445). Forms complexes of many stoichiometries with Raf1 and RbcL (PubMed:32451445).</text>
</comment>
<comment type="subcellular location">
    <subcellularLocation>
        <location evidence="2 3">Carboxysome</location>
    </subcellularLocation>
    <text evidence="1 3">This cyanobacterium makes beta-type carboxysomes (PubMed:24907906). In the carboxysome RuBisCO is organized into a paracrystalline array (By similarity).</text>
</comment>
<comment type="induction">
    <text evidence="5">Part of the rbcL-rbcS operon, transcribed in light and constitutively during growth on fructose.</text>
</comment>
<comment type="miscellaneous">
    <text evidence="4">RuBisCO folding and assembly commences when the nascent large subunit folds with the help of chaperonin GroEL-GroES. Both RbcX and Raf1 help folded RbcL release from the chaperonin and dimerize; dimeric Raf1 binds to RbcL(2) leading to an RbcL8-Raf1(8) complex. RbcS displaces Raf1, resulting in holoenzyme formation.</text>
</comment>
<comment type="miscellaneous">
    <text evidence="2 4">The basic functional RuBisCO is composed of a large chain homodimer in a 'head-to-tail' conformation. In form I RuBisCO this homodimer is arranged in a barrel-like tetramer with the small subunits forming a tetrameric 'cap' on each end of the 'barrel'.</text>
</comment>
<comment type="similarity">
    <text evidence="2">Belongs to the RuBisCO small chain family.</text>
</comment>
<evidence type="ECO:0000250" key="1">
    <source>
        <dbReference type="UniProtKB" id="Q31NB2"/>
    </source>
</evidence>
<evidence type="ECO:0000255" key="2">
    <source>
        <dbReference type="HAMAP-Rule" id="MF_00859"/>
    </source>
</evidence>
<evidence type="ECO:0000269" key="3">
    <source>
    </source>
</evidence>
<evidence type="ECO:0000269" key="4">
    <source>
    </source>
</evidence>
<evidence type="ECO:0000269" key="5">
    <source>
    </source>
</evidence>
<evidence type="ECO:0000303" key="6">
    <source>
    </source>
</evidence>
<evidence type="ECO:0007744" key="7">
    <source>
        <dbReference type="PDB" id="6LRR"/>
    </source>
</evidence>
<evidence type="ECO:0007744" key="8">
    <source>
        <dbReference type="PDB" id="6LRS"/>
    </source>
</evidence>
<evidence type="ECO:0007829" key="9">
    <source>
        <dbReference type="PDB" id="6LRR"/>
    </source>
</evidence>
<evidence type="ECO:0007829" key="10">
    <source>
        <dbReference type="PDB" id="6Z1F"/>
    </source>
</evidence>
<accession>P06514</accession>
<dbReference type="EMBL" id="J01540">
    <property type="protein sequence ID" value="AAA22042.1"/>
    <property type="molecule type" value="Genomic_DNA"/>
</dbReference>
<dbReference type="EMBL" id="L02520">
    <property type="protein sequence ID" value="AAA22025.1"/>
    <property type="molecule type" value="Genomic_DNA"/>
</dbReference>
<dbReference type="EMBL" id="L02521">
    <property type="protein sequence ID" value="AAA22026.1"/>
    <property type="molecule type" value="Genomic_DNA"/>
</dbReference>
<dbReference type="EMBL" id="L02522">
    <property type="protein sequence ID" value="AAA22030.1"/>
    <property type="molecule type" value="Genomic_DNA"/>
</dbReference>
<dbReference type="EMBL" id="BA000019">
    <property type="protein sequence ID" value="BAB77892.1"/>
    <property type="molecule type" value="Genomic_DNA"/>
</dbReference>
<dbReference type="PIR" id="AH1996">
    <property type="entry name" value="AH1996"/>
</dbReference>
<dbReference type="RefSeq" id="WP_010995695.1">
    <property type="nucleotide sequence ID" value="NZ_RSCN01000022.1"/>
</dbReference>
<dbReference type="PDB" id="6LRR">
    <property type="method" value="EM"/>
    <property type="resolution" value="3.37 A"/>
    <property type="chains" value="Q/R/T/U/V/W/X/Y=1-109"/>
</dbReference>
<dbReference type="PDB" id="6LRS">
    <property type="method" value="EM"/>
    <property type="resolution" value="3.37 A"/>
    <property type="chains" value="Q/R/S/T=1-109"/>
</dbReference>
<dbReference type="PDB" id="6Z1F">
    <property type="method" value="EM"/>
    <property type="resolution" value="2.86 A"/>
    <property type="chains" value="I/J/K/L/M/N/O/P=1-109"/>
</dbReference>
<dbReference type="PDB" id="6Z1G">
    <property type="method" value="EM"/>
    <property type="resolution" value="8.20 A"/>
    <property type="chains" value="D/E=1-109"/>
</dbReference>
<dbReference type="PDBsum" id="6LRR"/>
<dbReference type="PDBsum" id="6LRS"/>
<dbReference type="PDBsum" id="6Z1F"/>
<dbReference type="PDBsum" id="6Z1G"/>
<dbReference type="EMDB" id="EMD-0959"/>
<dbReference type="EMDB" id="EMD-0960"/>
<dbReference type="EMDB" id="EMD-11029"/>
<dbReference type="SMR" id="P06514"/>
<dbReference type="STRING" id="103690.gene:10493539"/>
<dbReference type="KEGG" id="ana:alr1526"/>
<dbReference type="eggNOG" id="COG4451">
    <property type="taxonomic scope" value="Bacteria"/>
</dbReference>
<dbReference type="OrthoDB" id="9788955at2"/>
<dbReference type="Proteomes" id="UP000002483">
    <property type="component" value="Chromosome"/>
</dbReference>
<dbReference type="GO" id="GO:0031470">
    <property type="term" value="C:carboxysome"/>
    <property type="evidence" value="ECO:0000314"/>
    <property type="project" value="UniProtKB"/>
</dbReference>
<dbReference type="GO" id="GO:0016984">
    <property type="term" value="F:ribulose-bisphosphate carboxylase activity"/>
    <property type="evidence" value="ECO:0007669"/>
    <property type="project" value="UniProtKB-UniRule"/>
</dbReference>
<dbReference type="GO" id="GO:0009853">
    <property type="term" value="P:photorespiration"/>
    <property type="evidence" value="ECO:0007669"/>
    <property type="project" value="UniProtKB-KW"/>
</dbReference>
<dbReference type="GO" id="GO:0019253">
    <property type="term" value="P:reductive pentose-phosphate cycle"/>
    <property type="evidence" value="ECO:0007669"/>
    <property type="project" value="UniProtKB-UniRule"/>
</dbReference>
<dbReference type="CDD" id="cd03527">
    <property type="entry name" value="RuBisCO_small"/>
    <property type="match status" value="1"/>
</dbReference>
<dbReference type="Gene3D" id="3.30.190.10">
    <property type="entry name" value="Ribulose bisphosphate carboxylase, small subunit"/>
    <property type="match status" value="1"/>
</dbReference>
<dbReference type="HAMAP" id="MF_00859">
    <property type="entry name" value="RuBisCO_S_bact"/>
    <property type="match status" value="1"/>
</dbReference>
<dbReference type="InterPro" id="IPR024681">
    <property type="entry name" value="RuBisCO_ssu"/>
</dbReference>
<dbReference type="InterPro" id="IPR000894">
    <property type="entry name" value="RuBisCO_ssu_dom"/>
</dbReference>
<dbReference type="InterPro" id="IPR036385">
    <property type="entry name" value="RuBisCO_ssu_sf"/>
</dbReference>
<dbReference type="PANTHER" id="PTHR31262">
    <property type="entry name" value="RIBULOSE BISPHOSPHATE CARBOXYLASE SMALL CHAIN 1, CHLOROPLASTIC"/>
    <property type="match status" value="1"/>
</dbReference>
<dbReference type="Pfam" id="PF00101">
    <property type="entry name" value="RuBisCO_small"/>
    <property type="match status" value="1"/>
</dbReference>
<dbReference type="SMART" id="SM00961">
    <property type="entry name" value="RuBisCO_small"/>
    <property type="match status" value="1"/>
</dbReference>
<dbReference type="SUPFAM" id="SSF55239">
    <property type="entry name" value="RuBisCO, small subunit"/>
    <property type="match status" value="1"/>
</dbReference>
<protein>
    <recommendedName>
        <fullName evidence="2">Ribulose bisphosphate carboxylase small subunit</fullName>
        <shortName evidence="2">RuBisCO small subunit</shortName>
    </recommendedName>
</protein>
<organism>
    <name type="scientific">Nostoc sp. (strain PCC 7120 / SAG 25.82 / UTEX 2576)</name>
    <dbReference type="NCBI Taxonomy" id="103690"/>
    <lineage>
        <taxon>Bacteria</taxon>
        <taxon>Bacillati</taxon>
        <taxon>Cyanobacteriota</taxon>
        <taxon>Cyanophyceae</taxon>
        <taxon>Nostocales</taxon>
        <taxon>Nostocaceae</taxon>
        <taxon>Nostoc</taxon>
    </lineage>
</organism>
<reference key="1">
    <citation type="journal article" date="1984" name="Proc. Natl. Acad. Sci. U.S.A.">
        <title>Cotranscription of genes encoding the small and large subunits of ribulose-1,5-bisphosphate carboxylase in the cyanobacterium Anabaena 7120.</title>
        <authorList>
            <person name="Nierzwicki-Bauer S.A."/>
            <person name="Curtis S.E."/>
            <person name="Haselkorn R."/>
        </authorList>
    </citation>
    <scope>NUCLEOTIDE SEQUENCE [GENOMIC DNA]</scope>
    <scope>INDUCTION</scope>
    <scope>OPERON STRUCTURE</scope>
    <source>
        <strain>PCC 7120 / SAG 25.82 / UTEX 2576</strain>
    </source>
</reference>
<reference key="2">
    <citation type="journal article" date="2001" name="DNA Res.">
        <title>Complete genomic sequence of the filamentous nitrogen-fixing cyanobacterium Anabaena sp. strain PCC 7120.</title>
        <authorList>
            <person name="Kaneko T."/>
            <person name="Nakamura Y."/>
            <person name="Wolk C.P."/>
            <person name="Kuritz T."/>
            <person name="Sasamoto S."/>
            <person name="Watanabe A."/>
            <person name="Iriguchi M."/>
            <person name="Ishikawa A."/>
            <person name="Kawashima K."/>
            <person name="Kimura T."/>
            <person name="Kishida Y."/>
            <person name="Kohara M."/>
            <person name="Matsumoto M."/>
            <person name="Matsuno A."/>
            <person name="Muraki A."/>
            <person name="Nakazaki N."/>
            <person name="Shimpo S."/>
            <person name="Sugimoto M."/>
            <person name="Takazawa M."/>
            <person name="Yamada M."/>
            <person name="Yasuda M."/>
            <person name="Tabata S."/>
        </authorList>
    </citation>
    <scope>NUCLEOTIDE SEQUENCE [LARGE SCALE GENOMIC DNA]</scope>
    <source>
        <strain>PCC 7120 / SAG 25.82 / UTEX 2576</strain>
    </source>
</reference>
<reference key="3">
    <citation type="journal article" date="2014" name="Photosyn. Res.">
        <title>Identification and characterization of a carboxysomal gamma-carbonic anhydrase from the cyanobacterium Nostoc sp. PCC 7120.</title>
        <authorList>
            <person name="de Araujo C."/>
            <person name="Arefeen D."/>
            <person name="Tadesse Y."/>
            <person name="Long B.M."/>
            <person name="Price G.D."/>
            <person name="Rowlett R.S."/>
            <person name="Kimber M.S."/>
            <person name="Espie G.S."/>
        </authorList>
    </citation>
    <scope>SUBCELLULAR LOCATION</scope>
    <source>
        <strain>PCC 7120 / SAG 25.82 / UTEX 2576</strain>
    </source>
</reference>
<reference evidence="7 8" key="4">
    <citation type="journal article" date="2020" name="Nat. Plants">
        <title>Molecular basis for the assembly of RuBisCO assisted by the chaperone Raf1.</title>
        <authorList>
            <person name="Xia L.Y."/>
            <person name="Jiang Y.L."/>
            <person name="Kong W.W."/>
            <person name="Sun H."/>
            <person name="Li W.F."/>
            <person name="Chen Y."/>
            <person name="Zhou C.Z."/>
        </authorList>
    </citation>
    <scope>STRUCTURE BY ELECTRON MICROSCOPY (3.37 ANGSTROMS) IN COMPLEX WITH RBCL AND RAF1</scope>
    <scope>FUNCTION</scope>
    <scope>RUBISCO FOLDING AND ASSEMBLY</scope>
    <scope>SUBUNIT</scope>
    <source>
        <strain>PCC 7120 / SAG 25.82 / UTEX 2576</strain>
    </source>
</reference>
<proteinExistence type="evidence at protein level"/>
<name>RBS_NOSS1</name>
<keyword id="KW-0002">3D-structure</keyword>
<keyword id="KW-1283">Bacterial microcompartment</keyword>
<keyword id="KW-0113">Calvin cycle</keyword>
<keyword id="KW-0120">Carbon dioxide fixation</keyword>
<keyword id="KW-1282">Carboxysome</keyword>
<keyword id="KW-0601">Photorespiration</keyword>
<keyword id="KW-0602">Photosynthesis</keyword>
<keyword id="KW-1185">Reference proteome</keyword>
<gene>
    <name evidence="2" type="primary">cbbS</name>
    <name evidence="2 6" type="synonym">rbcS</name>
    <name type="ordered locus">alr1526</name>
</gene>
<feature type="chain" id="PRO_0000198610" description="Ribulose bisphosphate carboxylase small subunit">
    <location>
        <begin position="1"/>
        <end position="109"/>
    </location>
</feature>
<feature type="strand" evidence="9">
    <location>
        <begin position="11"/>
        <end position="13"/>
    </location>
</feature>
<feature type="strand" evidence="10">
    <location>
        <begin position="15"/>
        <end position="17"/>
    </location>
</feature>
<feature type="helix" evidence="10">
    <location>
        <begin position="21"/>
        <end position="34"/>
    </location>
</feature>
<feature type="strand" evidence="10">
    <location>
        <begin position="37"/>
        <end position="45"/>
    </location>
</feature>
<feature type="helix" evidence="10">
    <location>
        <begin position="66"/>
        <end position="79"/>
    </location>
</feature>
<feature type="strand" evidence="10">
    <location>
        <begin position="83"/>
        <end position="91"/>
    </location>
</feature>
<feature type="turn" evidence="10">
    <location>
        <begin position="92"/>
        <end position="95"/>
    </location>
</feature>
<feature type="strand" evidence="10">
    <location>
        <begin position="96"/>
        <end position="104"/>
    </location>
</feature>